<organism>
    <name type="scientific">Arabidopsis thaliana</name>
    <name type="common">Mouse-ear cress</name>
    <dbReference type="NCBI Taxonomy" id="3702"/>
    <lineage>
        <taxon>Eukaryota</taxon>
        <taxon>Viridiplantae</taxon>
        <taxon>Streptophyta</taxon>
        <taxon>Embryophyta</taxon>
        <taxon>Tracheophyta</taxon>
        <taxon>Spermatophyta</taxon>
        <taxon>Magnoliopsida</taxon>
        <taxon>eudicotyledons</taxon>
        <taxon>Gunneridae</taxon>
        <taxon>Pentapetalae</taxon>
        <taxon>rosids</taxon>
        <taxon>malvids</taxon>
        <taxon>Brassicales</taxon>
        <taxon>Brassicaceae</taxon>
        <taxon>Camelineae</taxon>
        <taxon>Arabidopsis</taxon>
    </lineage>
</organism>
<name>PGP1A_ARATH</name>
<gene>
    <name type="primary">PGLP1A</name>
    <name type="ordered locus">At5g36700</name>
    <name type="ORF">F24C7</name>
</gene>
<evidence type="ECO:0000250" key="1"/>
<evidence type="ECO:0000255" key="2"/>
<evidence type="ECO:0000269" key="3">
    <source>
    </source>
</evidence>
<evidence type="ECO:0000305" key="4"/>
<evidence type="ECO:0007744" key="5">
    <source>
    </source>
</evidence>
<evidence type="ECO:0007744" key="6">
    <source>
    </source>
</evidence>
<accession>P0DKC3</accession>
<accession>F4K4H2</accession>
<accession>Q8GY27</accession>
<accession>Q8L3U4</accession>
<accession>Q9LHT3</accession>
<keyword id="KW-0007">Acetylation</keyword>
<keyword id="KW-0025">Alternative splicing</keyword>
<keyword id="KW-0150">Chloroplast</keyword>
<keyword id="KW-0378">Hydrolase</keyword>
<keyword id="KW-0597">Phosphoprotein</keyword>
<keyword id="KW-0601">Photorespiration</keyword>
<keyword id="KW-0934">Plastid</keyword>
<keyword id="KW-1185">Reference proteome</keyword>
<keyword id="KW-0809">Transit peptide</keyword>
<protein>
    <recommendedName>
        <fullName>Phosphoglycolate phosphatase 1A, chloroplastic</fullName>
        <ecNumber>3.1.3.18</ecNumber>
    </recommendedName>
</protein>
<comment type="function">
    <text evidence="3">Photorespiratory enzyme that dephosphorylates the 2-phosphoglycolate produced by the RuBisCO oxygenation reaction.</text>
</comment>
<comment type="catalytic activity">
    <reaction evidence="3">
        <text>2-phosphoglycolate + H2O = glycolate + phosphate</text>
        <dbReference type="Rhea" id="RHEA:14369"/>
        <dbReference type="ChEBI" id="CHEBI:15377"/>
        <dbReference type="ChEBI" id="CHEBI:29805"/>
        <dbReference type="ChEBI" id="CHEBI:43474"/>
        <dbReference type="ChEBI" id="CHEBI:58033"/>
        <dbReference type="EC" id="3.1.3.18"/>
    </reaction>
</comment>
<comment type="subcellular location">
    <subcellularLocation>
        <location evidence="2">Plastid</location>
        <location evidence="2">Chloroplast</location>
    </subcellularLocation>
</comment>
<comment type="alternative products">
    <event type="alternative splicing"/>
    <isoform>
        <id>P0DKC3-1</id>
        <name>1</name>
        <sequence type="displayed"/>
    </isoform>
    <isoform>
        <id>P0DKC3-2</id>
        <name>2</name>
        <sequence type="described" ref="VSP_046408 VSP_046409"/>
    </isoform>
</comment>
<comment type="disruption phenotype">
    <text evidence="3">Chlorotic primary leaves soon after germination and plants not viable when grown under ambient air, but normal growth under CO(2)-enriched air.</text>
</comment>
<comment type="similarity">
    <text evidence="4">Belongs to the HAD-like hydrolase superfamily. CbbY/CbbZ/Gph/YieH family.</text>
</comment>
<comment type="sequence caution" evidence="4">
    <conflict type="erroneous gene model prediction">
        <sequence resource="EMBL-CDS" id="BAA97552"/>
    </conflict>
</comment>
<comment type="sequence caution" evidence="4">
    <conflict type="erroneous initiation">
        <sequence resource="EMBL-CDS" id="BAC42546"/>
    </conflict>
    <text>Truncated N-terminus.</text>
</comment>
<sequence>MLSRSVASAVTPVSSSSLLPNSKPIFCLKTLSGYRSSSFCGGCIRKINHKPLRMTSSNITPRAMATQQLENADQLIDSVETFIFDCDGVIWKGDKLIEGVPETLDMLRAKGKRLVFVTNNSTKSRKQYGKKFETLGLNVNEEEIFASSFAAAAYLQSINFPKDKKVYVIGEEGILKELELAGFQYLGGPDDGKRQIELKPGFLMEHDHDVGAVVVGFDRYFNYYKIQYGTLCIRENPGCLFIATNRDAVTHLTDAQEWAGGGSMVGALVGSTQREPLVVGKPSTFMMDYLADKFGIQKSQICMVGDRLDTDILFGQNGGCKTLLVLSGVTSISMLESPENKIQPDFYTSKISDFLSPKAATV</sequence>
<proteinExistence type="evidence at protein level"/>
<dbReference type="EC" id="3.1.3.18"/>
<dbReference type="EMBL" id="AP002029">
    <property type="protein sequence ID" value="BAA97552.1"/>
    <property type="status" value="ALT_SEQ"/>
    <property type="molecule type" value="Genomic_DNA"/>
</dbReference>
<dbReference type="EMBL" id="CP002688">
    <property type="protein sequence ID" value="AED94099.1"/>
    <property type="molecule type" value="Genomic_DNA"/>
</dbReference>
<dbReference type="EMBL" id="CP002688">
    <property type="protein sequence ID" value="AED94100.1"/>
    <property type="molecule type" value="Genomic_DNA"/>
</dbReference>
<dbReference type="EMBL" id="CP002688">
    <property type="protein sequence ID" value="AED94101.1"/>
    <property type="molecule type" value="Genomic_DNA"/>
</dbReference>
<dbReference type="EMBL" id="CP002688">
    <property type="protein sequence ID" value="AED94102.1"/>
    <property type="molecule type" value="Genomic_DNA"/>
</dbReference>
<dbReference type="EMBL" id="AY094446">
    <property type="protein sequence ID" value="AAM19818.1"/>
    <property type="molecule type" value="mRNA"/>
</dbReference>
<dbReference type="EMBL" id="AY122899">
    <property type="protein sequence ID" value="AAM67432.1"/>
    <property type="molecule type" value="mRNA"/>
</dbReference>
<dbReference type="EMBL" id="AK117908">
    <property type="protein sequence ID" value="BAC42546.1"/>
    <property type="status" value="ALT_INIT"/>
    <property type="molecule type" value="mRNA"/>
</dbReference>
<dbReference type="RefSeq" id="NP_001119316.1">
    <molecule id="P0DKC3-1"/>
    <property type="nucleotide sequence ID" value="NM_001125844.1"/>
</dbReference>
<dbReference type="RefSeq" id="NP_001119317.1">
    <molecule id="P0DKC3-2"/>
    <property type="nucleotide sequence ID" value="NM_001125845.1"/>
</dbReference>
<dbReference type="RefSeq" id="NP_001119318.1">
    <molecule id="P0DKC3-1"/>
    <property type="nucleotide sequence ID" value="NM_001125846.2"/>
</dbReference>
<dbReference type="RefSeq" id="NP_001190427.1">
    <molecule id="P0DKC3-1"/>
    <property type="nucleotide sequence ID" value="NM_001203498.2"/>
</dbReference>
<dbReference type="RefSeq" id="NP_001190428.1">
    <molecule id="P0DKC3-1"/>
    <property type="nucleotide sequence ID" value="NM_001203499.1"/>
</dbReference>
<dbReference type="RefSeq" id="NP_198485.2">
    <molecule id="P0DKC3-1"/>
    <property type="nucleotide sequence ID" value="NM_123027.4"/>
</dbReference>
<dbReference type="RefSeq" id="NP_198495.1">
    <molecule id="P0DKC3-1"/>
    <property type="nucleotide sequence ID" value="NM_123037.5"/>
</dbReference>
<dbReference type="SMR" id="P0DKC3"/>
<dbReference type="BioGRID" id="18897">
    <property type="interactions" value="1"/>
</dbReference>
<dbReference type="FunCoup" id="P0DKC3">
    <property type="interactions" value="1493"/>
</dbReference>
<dbReference type="STRING" id="3702.P0DKC3"/>
<dbReference type="GlyGen" id="P0DKC3">
    <property type="glycosylation" value="1 site"/>
</dbReference>
<dbReference type="iPTMnet" id="P0DKC3"/>
<dbReference type="MetOSite" id="P0DKC3"/>
<dbReference type="PaxDb" id="3702-AT5G36700.1"/>
<dbReference type="ProMEX" id="P0DKC3"/>
<dbReference type="DNASU" id="833635"/>
<dbReference type="EnsemblPlants" id="AT5G36700.1">
    <molecule id="P0DKC3-1"/>
    <property type="protein sequence ID" value="AT5G36700.1"/>
    <property type="gene ID" value="AT5G36700"/>
</dbReference>
<dbReference type="EnsemblPlants" id="AT5G36700.2">
    <molecule id="P0DKC3-1"/>
    <property type="protein sequence ID" value="AT5G36700.2"/>
    <property type="gene ID" value="AT5G36700"/>
</dbReference>
<dbReference type="EnsemblPlants" id="AT5G36700.3">
    <molecule id="P0DKC3-2"/>
    <property type="protein sequence ID" value="AT5G36700.3"/>
    <property type="gene ID" value="AT5G36700"/>
</dbReference>
<dbReference type="EnsemblPlants" id="AT5G36700.4">
    <molecule id="P0DKC3-1"/>
    <property type="protein sequence ID" value="AT5G36700.4"/>
    <property type="gene ID" value="AT5G36700"/>
</dbReference>
<dbReference type="EnsemblPlants" id="AT5G36790.1">
    <molecule id="P0DKC3-1"/>
    <property type="protein sequence ID" value="AT5G36790.1"/>
    <property type="gene ID" value="AT5G36790"/>
</dbReference>
<dbReference type="EnsemblPlants" id="AT5G36790.2">
    <molecule id="P0DKC3-1"/>
    <property type="protein sequence ID" value="AT5G36790.2"/>
    <property type="gene ID" value="AT5G36790"/>
</dbReference>
<dbReference type="EnsemblPlants" id="AT5G36790.3">
    <molecule id="P0DKC3-1"/>
    <property type="protein sequence ID" value="AT5G36790.3"/>
    <property type="gene ID" value="AT5G36790"/>
</dbReference>
<dbReference type="Gramene" id="AT5G36700.1">
    <molecule id="P0DKC3-1"/>
    <property type="protein sequence ID" value="AT5G36700.1"/>
    <property type="gene ID" value="AT5G36700"/>
</dbReference>
<dbReference type="Gramene" id="AT5G36700.2">
    <molecule id="P0DKC3-1"/>
    <property type="protein sequence ID" value="AT5G36700.2"/>
    <property type="gene ID" value="AT5G36700"/>
</dbReference>
<dbReference type="Gramene" id="AT5G36700.3">
    <molecule id="P0DKC3-2"/>
    <property type="protein sequence ID" value="AT5G36700.3"/>
    <property type="gene ID" value="AT5G36700"/>
</dbReference>
<dbReference type="Gramene" id="AT5G36700.4">
    <molecule id="P0DKC3-1"/>
    <property type="protein sequence ID" value="AT5G36700.4"/>
    <property type="gene ID" value="AT5G36700"/>
</dbReference>
<dbReference type="Gramene" id="AT5G36790.1">
    <molecule id="P0DKC3-1"/>
    <property type="protein sequence ID" value="AT5G36790.1"/>
    <property type="gene ID" value="AT5G36790"/>
</dbReference>
<dbReference type="Gramene" id="AT5G36790.2">
    <molecule id="P0DKC3-1"/>
    <property type="protein sequence ID" value="AT5G36790.2"/>
    <property type="gene ID" value="AT5G36790"/>
</dbReference>
<dbReference type="Gramene" id="AT5G36790.3">
    <molecule id="P0DKC3-1"/>
    <property type="protein sequence ID" value="AT5G36790.3"/>
    <property type="gene ID" value="AT5G36790"/>
</dbReference>
<dbReference type="KEGG" id="ath:AT5G36700"/>
<dbReference type="KEGG" id="ath:AT5G36790"/>
<dbReference type="Araport" id="AT5G36700"/>
<dbReference type="TAIR" id="AT5G36700">
    <property type="gene designation" value="PGLP1"/>
</dbReference>
<dbReference type="eggNOG" id="KOG2882">
    <property type="taxonomic scope" value="Eukaryota"/>
</dbReference>
<dbReference type="HOGENOM" id="CLU_043473_0_0_1"/>
<dbReference type="InParanoid" id="P0DKC3"/>
<dbReference type="OMA" id="PPMHRET"/>
<dbReference type="OrthoDB" id="413953at2759"/>
<dbReference type="PhylomeDB" id="P0DKC3"/>
<dbReference type="BioCyc" id="MetaCyc:AT5G36700-MONOMER"/>
<dbReference type="PRO" id="PR:P0DKC3"/>
<dbReference type="Proteomes" id="UP000006548">
    <property type="component" value="Chromosome 5"/>
</dbReference>
<dbReference type="ExpressionAtlas" id="P0DKC3">
    <property type="expression patterns" value="baseline and differential"/>
</dbReference>
<dbReference type="GO" id="GO:0009507">
    <property type="term" value="C:chloroplast"/>
    <property type="evidence" value="ECO:0007669"/>
    <property type="project" value="UniProtKB-SubCell"/>
</dbReference>
<dbReference type="GO" id="GO:0008967">
    <property type="term" value="F:phosphoglycolate phosphatase activity"/>
    <property type="evidence" value="ECO:0007669"/>
    <property type="project" value="UniProtKB-EC"/>
</dbReference>
<dbReference type="GO" id="GO:0009853">
    <property type="term" value="P:photorespiration"/>
    <property type="evidence" value="ECO:0007669"/>
    <property type="project" value="UniProtKB-KW"/>
</dbReference>
<dbReference type="CDD" id="cd07510">
    <property type="entry name" value="HAD_Pase_UmpH-like"/>
    <property type="match status" value="1"/>
</dbReference>
<dbReference type="FunFam" id="3.40.50.1000:FF:000447">
    <property type="match status" value="1"/>
</dbReference>
<dbReference type="FunFam" id="3.40.50.1000:FF:000039">
    <property type="entry name" value="Phosphoglycolate phosphatase"/>
    <property type="match status" value="1"/>
</dbReference>
<dbReference type="Gene3D" id="3.40.50.1000">
    <property type="entry name" value="HAD superfamily/HAD-like"/>
    <property type="match status" value="2"/>
</dbReference>
<dbReference type="InterPro" id="IPR036412">
    <property type="entry name" value="HAD-like_sf"/>
</dbReference>
<dbReference type="InterPro" id="IPR006357">
    <property type="entry name" value="HAD-SF_hydro_IIA"/>
</dbReference>
<dbReference type="InterPro" id="IPR023214">
    <property type="entry name" value="HAD_sf"/>
</dbReference>
<dbReference type="InterPro" id="IPR006349">
    <property type="entry name" value="PGP_euk"/>
</dbReference>
<dbReference type="NCBIfam" id="TIGR01460">
    <property type="entry name" value="HAD-SF-IIA"/>
    <property type="match status" value="1"/>
</dbReference>
<dbReference type="NCBIfam" id="TIGR01452">
    <property type="entry name" value="PGP_euk"/>
    <property type="match status" value="1"/>
</dbReference>
<dbReference type="PANTHER" id="PTHR19288">
    <property type="entry name" value="4-NITROPHENYLPHOSPHATASE-RELATED"/>
    <property type="match status" value="1"/>
</dbReference>
<dbReference type="PANTHER" id="PTHR19288:SF46">
    <property type="entry name" value="HALOACID DEHALOGENASE-LIKE HYDROLASE DOMAIN-CONTAINING PROTEIN 2"/>
    <property type="match status" value="1"/>
</dbReference>
<dbReference type="Pfam" id="PF13344">
    <property type="entry name" value="Hydrolase_6"/>
    <property type="match status" value="1"/>
</dbReference>
<dbReference type="Pfam" id="PF13242">
    <property type="entry name" value="Hydrolase_like"/>
    <property type="match status" value="1"/>
</dbReference>
<dbReference type="PIRSF" id="PIRSF000915">
    <property type="entry name" value="PGP-type_phosphatase"/>
    <property type="match status" value="1"/>
</dbReference>
<dbReference type="SFLD" id="SFLDS00003">
    <property type="entry name" value="Haloacid_Dehalogenase"/>
    <property type="match status" value="1"/>
</dbReference>
<dbReference type="SFLD" id="SFLDF00039">
    <property type="entry name" value="phosphoglycolate_phosphatase_2"/>
    <property type="match status" value="1"/>
</dbReference>
<dbReference type="SUPFAM" id="SSF56784">
    <property type="entry name" value="HAD-like"/>
    <property type="match status" value="1"/>
</dbReference>
<feature type="transit peptide" description="Chloroplast" evidence="6">
    <location>
        <begin position="1"/>
        <end position="54"/>
    </location>
</feature>
<feature type="chain" id="PRO_0000422097" description="Phosphoglycolate phosphatase 1A, chloroplastic">
    <location>
        <begin position="55"/>
        <end position="362"/>
    </location>
</feature>
<feature type="active site" description="Nucleophile" evidence="1">
    <location>
        <position position="80"/>
    </location>
</feature>
<feature type="modified residue" description="N-acetylthreonine" evidence="6">
    <location>
        <position position="55"/>
    </location>
</feature>
<feature type="modified residue" description="Phosphoserine" evidence="5">
    <location>
        <position position="356"/>
    </location>
</feature>
<feature type="splice variant" id="VSP_046408" description="In isoform 2." evidence="4">
    <original>VTSI</original>
    <variation>ITNL</variation>
    <location>
        <begin position="329"/>
        <end position="332"/>
    </location>
</feature>
<feature type="splice variant" id="VSP_046409" description="In isoform 2." evidence="4">
    <location>
        <begin position="333"/>
        <end position="362"/>
    </location>
</feature>
<feature type="mutagenesis site" description="60% decreased catalytic activity." evidence="3">
    <original>G</original>
    <variation>S</variation>
    <location>
        <position position="260"/>
    </location>
</feature>
<feature type="sequence conflict" description="In Ref. 4; BAC42546." evidence="4" ref="4">
    <original>F</original>
    <variation>L</variation>
    <location>
        <position position="84"/>
    </location>
</feature>
<reference key="1">
    <citation type="submission" date="2000-05" db="EMBL/GenBank/DDBJ databases">
        <title>Structural analysis of Arabidopsis thaliana chromosome 5. XI.</title>
        <authorList>
            <person name="Kaneko T."/>
            <person name="Katoh T."/>
            <person name="Asamizu E."/>
            <person name="Sato S."/>
            <person name="Nakamura Y."/>
            <person name="Kotani H."/>
            <person name="Tabata S."/>
        </authorList>
    </citation>
    <scope>NUCLEOTIDE SEQUENCE [LARGE SCALE GENOMIC DNA]</scope>
    <source>
        <strain>cv. Columbia</strain>
    </source>
</reference>
<reference key="2">
    <citation type="journal article" date="2017" name="Plant J.">
        <title>Araport11: a complete reannotation of the Arabidopsis thaliana reference genome.</title>
        <authorList>
            <person name="Cheng C.Y."/>
            <person name="Krishnakumar V."/>
            <person name="Chan A.P."/>
            <person name="Thibaud-Nissen F."/>
            <person name="Schobel S."/>
            <person name="Town C.D."/>
        </authorList>
    </citation>
    <scope>GENOME REANNOTATION</scope>
    <source>
        <strain>cv. Columbia</strain>
    </source>
</reference>
<reference key="3">
    <citation type="journal article" date="2003" name="Science">
        <title>Empirical analysis of transcriptional activity in the Arabidopsis genome.</title>
        <authorList>
            <person name="Yamada K."/>
            <person name="Lim J."/>
            <person name="Dale J.M."/>
            <person name="Chen H."/>
            <person name="Shinn P."/>
            <person name="Palm C.J."/>
            <person name="Southwick A.M."/>
            <person name="Wu H.C."/>
            <person name="Kim C.J."/>
            <person name="Nguyen M."/>
            <person name="Pham P.K."/>
            <person name="Cheuk R.F."/>
            <person name="Karlin-Newmann G."/>
            <person name="Liu S.X."/>
            <person name="Lam B."/>
            <person name="Sakano H."/>
            <person name="Wu T."/>
            <person name="Yu G."/>
            <person name="Miranda M."/>
            <person name="Quach H.L."/>
            <person name="Tripp M."/>
            <person name="Chang C.H."/>
            <person name="Lee J.M."/>
            <person name="Toriumi M.J."/>
            <person name="Chan M.M."/>
            <person name="Tang C.C."/>
            <person name="Onodera C.S."/>
            <person name="Deng J.M."/>
            <person name="Akiyama K."/>
            <person name="Ansari Y."/>
            <person name="Arakawa T."/>
            <person name="Banh J."/>
            <person name="Banno F."/>
            <person name="Bowser L."/>
            <person name="Brooks S.Y."/>
            <person name="Carninci P."/>
            <person name="Chao Q."/>
            <person name="Choy N."/>
            <person name="Enju A."/>
            <person name="Goldsmith A.D."/>
            <person name="Gurjal M."/>
            <person name="Hansen N.F."/>
            <person name="Hayashizaki Y."/>
            <person name="Johnson-Hopson C."/>
            <person name="Hsuan V.W."/>
            <person name="Iida K."/>
            <person name="Karnes M."/>
            <person name="Khan S."/>
            <person name="Koesema E."/>
            <person name="Ishida J."/>
            <person name="Jiang P.X."/>
            <person name="Jones T."/>
            <person name="Kawai J."/>
            <person name="Kamiya A."/>
            <person name="Meyers C."/>
            <person name="Nakajima M."/>
            <person name="Narusaka M."/>
            <person name="Seki M."/>
            <person name="Sakurai T."/>
            <person name="Satou M."/>
            <person name="Tamse R."/>
            <person name="Vaysberg M."/>
            <person name="Wallender E.K."/>
            <person name="Wong C."/>
            <person name="Yamamura Y."/>
            <person name="Yuan S."/>
            <person name="Shinozaki K."/>
            <person name="Davis R.W."/>
            <person name="Theologis A."/>
            <person name="Ecker J.R."/>
        </authorList>
    </citation>
    <scope>NUCLEOTIDE SEQUENCE [LARGE SCALE MRNA] (ISOFORM 1)</scope>
    <source>
        <strain>cv. Columbia</strain>
    </source>
</reference>
<reference key="4">
    <citation type="journal article" date="2002" name="Science">
        <title>Functional annotation of a full-length Arabidopsis cDNA collection.</title>
        <authorList>
            <person name="Seki M."/>
            <person name="Narusaka M."/>
            <person name="Kamiya A."/>
            <person name="Ishida J."/>
            <person name="Satou M."/>
            <person name="Sakurai T."/>
            <person name="Nakajima M."/>
            <person name="Enju A."/>
            <person name="Akiyama K."/>
            <person name="Oono Y."/>
            <person name="Muramatsu M."/>
            <person name="Hayashizaki Y."/>
            <person name="Kawai J."/>
            <person name="Carninci P."/>
            <person name="Itoh M."/>
            <person name="Ishii Y."/>
            <person name="Arakawa T."/>
            <person name="Shibata K."/>
            <person name="Shinagawa A."/>
            <person name="Shinozaki K."/>
        </authorList>
    </citation>
    <scope>NUCLEOTIDE SEQUENCE [LARGE SCALE MRNA] OF 15-362 (ISOFORM 1)</scope>
    <source>
        <strain>cv. Columbia</strain>
    </source>
</reference>
<reference key="5">
    <citation type="journal article" date="2007" name="Plant Physiol.">
        <title>Identification of the photorespiratory 2-phosphoglycolate phosphatase, PGLP1, in Arabidopsis.</title>
        <authorList>
            <person name="Schwarte S."/>
            <person name="Bauwe H."/>
        </authorList>
    </citation>
    <scope>FUNCTION</scope>
    <scope>CATALYTIC ACTIVITY</scope>
    <scope>MUTAGENESIS OF GLY-260</scope>
    <scope>DISRUPTION PHENOTYPE</scope>
</reference>
<reference key="6">
    <citation type="journal article" date="2009" name="Plant Physiol.">
        <title>Large-scale Arabidopsis phosphoproteome profiling reveals novel chloroplast kinase substrates and phosphorylation networks.</title>
        <authorList>
            <person name="Reiland S."/>
            <person name="Messerli G."/>
            <person name="Baerenfaller K."/>
            <person name="Gerrits B."/>
            <person name="Endler A."/>
            <person name="Grossmann J."/>
            <person name="Gruissem W."/>
            <person name="Baginsky S."/>
        </authorList>
    </citation>
    <scope>PHOSPHORYLATION [LARGE SCALE ANALYSIS] AT SER-356</scope>
    <scope>IDENTIFICATION BY MASS SPECTROMETRY [LARGE SCALE ANALYSIS]</scope>
</reference>
<reference key="7">
    <citation type="journal article" date="2012" name="J. Proteome Res.">
        <title>Identification of phosphoproteins in Arabidopsis thaliana leaves using polyethylene glycol fractionation, immobilized metal-ion affinity chromatography, two-dimensional gel electrophoresis and mass spectrometry.</title>
        <authorList>
            <person name="Aryal U.K."/>
            <person name="Krochko J.E."/>
            <person name="Ross A.R."/>
        </authorList>
    </citation>
    <scope>IDENTIFICATION BY MASS SPECTROMETRY [LARGE SCALE ANALYSIS]</scope>
</reference>
<reference key="8">
    <citation type="journal article" date="2012" name="Mol. Cell. Proteomics">
        <title>Comparative large-scale characterisation of plant vs. mammal proteins reveals similar and idiosyncratic N-alpha acetylation features.</title>
        <authorList>
            <person name="Bienvenut W.V."/>
            <person name="Sumpton D."/>
            <person name="Martinez A."/>
            <person name="Lilla S."/>
            <person name="Espagne C."/>
            <person name="Meinnel T."/>
            <person name="Giglione C."/>
        </authorList>
    </citation>
    <scope>ACETYLATION [LARGE SCALE ANALYSIS] AT THR-55</scope>
    <scope>CLEAVAGE OF TRANSIT PEPTIDE [LARGE SCALE ANALYSIS] AFTER MET-54</scope>
    <scope>IDENTIFICATION BY MASS SPECTROMETRY [LARGE SCALE ANALYSIS]</scope>
</reference>